<comment type="function">
    <text evidence="1">Catalyzes the anti-1,4-elimination of the C-3 phosphate and the C-6 proR hydrogen from 5-enolpyruvylshikimate-3-phosphate (EPSP) to yield chorismate, which is the branch point compound that serves as the starting substrate for the three terminal pathways of aromatic amino acid biosynthesis. This reaction introduces a second double bond into the aromatic ring system.</text>
</comment>
<comment type="catalytic activity">
    <reaction evidence="1">
        <text>5-O-(1-carboxyvinyl)-3-phosphoshikimate = chorismate + phosphate</text>
        <dbReference type="Rhea" id="RHEA:21020"/>
        <dbReference type="ChEBI" id="CHEBI:29748"/>
        <dbReference type="ChEBI" id="CHEBI:43474"/>
        <dbReference type="ChEBI" id="CHEBI:57701"/>
        <dbReference type="EC" id="4.2.3.5"/>
    </reaction>
</comment>
<comment type="cofactor">
    <cofactor evidence="1">
        <name>FMNH2</name>
        <dbReference type="ChEBI" id="CHEBI:57618"/>
    </cofactor>
    <text evidence="1">Reduced FMN (FMNH(2)).</text>
</comment>
<comment type="pathway">
    <text evidence="1">Metabolic intermediate biosynthesis; chorismate biosynthesis; chorismate from D-erythrose 4-phosphate and phosphoenolpyruvate: step 7/7.</text>
</comment>
<comment type="subunit">
    <text evidence="1">Homotetramer.</text>
</comment>
<comment type="similarity">
    <text evidence="1">Belongs to the chorismate synthase family.</text>
</comment>
<feature type="chain" id="PRO_1000022526" description="Chorismate synthase">
    <location>
        <begin position="1"/>
        <end position="366"/>
    </location>
</feature>
<feature type="binding site" evidence="1">
    <location>
        <position position="48"/>
    </location>
    <ligand>
        <name>NADP(+)</name>
        <dbReference type="ChEBI" id="CHEBI:58349"/>
    </ligand>
</feature>
<feature type="binding site" evidence="1">
    <location>
        <position position="54"/>
    </location>
    <ligand>
        <name>NADP(+)</name>
        <dbReference type="ChEBI" id="CHEBI:58349"/>
    </ligand>
</feature>
<feature type="binding site" evidence="1">
    <location>
        <begin position="125"/>
        <end position="127"/>
    </location>
    <ligand>
        <name>FMN</name>
        <dbReference type="ChEBI" id="CHEBI:58210"/>
    </ligand>
</feature>
<feature type="binding site" evidence="1">
    <location>
        <begin position="238"/>
        <end position="239"/>
    </location>
    <ligand>
        <name>FMN</name>
        <dbReference type="ChEBI" id="CHEBI:58210"/>
    </ligand>
</feature>
<feature type="binding site" evidence="1">
    <location>
        <position position="278"/>
    </location>
    <ligand>
        <name>FMN</name>
        <dbReference type="ChEBI" id="CHEBI:58210"/>
    </ligand>
</feature>
<feature type="binding site" evidence="1">
    <location>
        <begin position="293"/>
        <end position="297"/>
    </location>
    <ligand>
        <name>FMN</name>
        <dbReference type="ChEBI" id="CHEBI:58210"/>
    </ligand>
</feature>
<feature type="binding site" evidence="1">
    <location>
        <position position="319"/>
    </location>
    <ligand>
        <name>FMN</name>
        <dbReference type="ChEBI" id="CHEBI:58210"/>
    </ligand>
</feature>
<evidence type="ECO:0000255" key="1">
    <source>
        <dbReference type="HAMAP-Rule" id="MF_00300"/>
    </source>
</evidence>
<proteinExistence type="inferred from homology"/>
<dbReference type="EC" id="4.2.3.5" evidence="1"/>
<dbReference type="EMBL" id="CP000388">
    <property type="protein sequence ID" value="ABG40063.1"/>
    <property type="molecule type" value="Genomic_DNA"/>
</dbReference>
<dbReference type="RefSeq" id="WP_011574379.1">
    <property type="nucleotide sequence ID" value="NC_008228.1"/>
</dbReference>
<dbReference type="SMR" id="Q15VM5"/>
<dbReference type="STRING" id="342610.Patl_1541"/>
<dbReference type="KEGG" id="pat:Patl_1541"/>
<dbReference type="eggNOG" id="COG0082">
    <property type="taxonomic scope" value="Bacteria"/>
</dbReference>
<dbReference type="HOGENOM" id="CLU_034547_0_2_6"/>
<dbReference type="OrthoDB" id="9771806at2"/>
<dbReference type="UniPathway" id="UPA00053">
    <property type="reaction ID" value="UER00090"/>
</dbReference>
<dbReference type="Proteomes" id="UP000001981">
    <property type="component" value="Chromosome"/>
</dbReference>
<dbReference type="GO" id="GO:0005829">
    <property type="term" value="C:cytosol"/>
    <property type="evidence" value="ECO:0007669"/>
    <property type="project" value="TreeGrafter"/>
</dbReference>
<dbReference type="GO" id="GO:0004107">
    <property type="term" value="F:chorismate synthase activity"/>
    <property type="evidence" value="ECO:0007669"/>
    <property type="project" value="UniProtKB-UniRule"/>
</dbReference>
<dbReference type="GO" id="GO:0010181">
    <property type="term" value="F:FMN binding"/>
    <property type="evidence" value="ECO:0007669"/>
    <property type="project" value="TreeGrafter"/>
</dbReference>
<dbReference type="GO" id="GO:0008652">
    <property type="term" value="P:amino acid biosynthetic process"/>
    <property type="evidence" value="ECO:0007669"/>
    <property type="project" value="UniProtKB-KW"/>
</dbReference>
<dbReference type="GO" id="GO:0009073">
    <property type="term" value="P:aromatic amino acid family biosynthetic process"/>
    <property type="evidence" value="ECO:0007669"/>
    <property type="project" value="UniProtKB-KW"/>
</dbReference>
<dbReference type="GO" id="GO:0009423">
    <property type="term" value="P:chorismate biosynthetic process"/>
    <property type="evidence" value="ECO:0007669"/>
    <property type="project" value="UniProtKB-UniRule"/>
</dbReference>
<dbReference type="CDD" id="cd07304">
    <property type="entry name" value="Chorismate_synthase"/>
    <property type="match status" value="1"/>
</dbReference>
<dbReference type="FunFam" id="3.60.150.10:FF:000001">
    <property type="entry name" value="Chorismate synthase"/>
    <property type="match status" value="1"/>
</dbReference>
<dbReference type="Gene3D" id="3.60.150.10">
    <property type="entry name" value="Chorismate synthase AroC"/>
    <property type="match status" value="1"/>
</dbReference>
<dbReference type="HAMAP" id="MF_00300">
    <property type="entry name" value="Chorismate_synth"/>
    <property type="match status" value="1"/>
</dbReference>
<dbReference type="InterPro" id="IPR000453">
    <property type="entry name" value="Chorismate_synth"/>
</dbReference>
<dbReference type="InterPro" id="IPR035904">
    <property type="entry name" value="Chorismate_synth_AroC_sf"/>
</dbReference>
<dbReference type="InterPro" id="IPR020541">
    <property type="entry name" value="Chorismate_synthase_CS"/>
</dbReference>
<dbReference type="NCBIfam" id="TIGR00033">
    <property type="entry name" value="aroC"/>
    <property type="match status" value="1"/>
</dbReference>
<dbReference type="NCBIfam" id="NF003793">
    <property type="entry name" value="PRK05382.1"/>
    <property type="match status" value="1"/>
</dbReference>
<dbReference type="PANTHER" id="PTHR21085">
    <property type="entry name" value="CHORISMATE SYNTHASE"/>
    <property type="match status" value="1"/>
</dbReference>
<dbReference type="PANTHER" id="PTHR21085:SF0">
    <property type="entry name" value="CHORISMATE SYNTHASE"/>
    <property type="match status" value="1"/>
</dbReference>
<dbReference type="Pfam" id="PF01264">
    <property type="entry name" value="Chorismate_synt"/>
    <property type="match status" value="1"/>
</dbReference>
<dbReference type="PIRSF" id="PIRSF001456">
    <property type="entry name" value="Chorismate_synth"/>
    <property type="match status" value="1"/>
</dbReference>
<dbReference type="SUPFAM" id="SSF103263">
    <property type="entry name" value="Chorismate synthase, AroC"/>
    <property type="match status" value="1"/>
</dbReference>
<dbReference type="PROSITE" id="PS00787">
    <property type="entry name" value="CHORISMATE_SYNTHASE_1"/>
    <property type="match status" value="1"/>
</dbReference>
<dbReference type="PROSITE" id="PS00789">
    <property type="entry name" value="CHORISMATE_SYNTHASE_3"/>
    <property type="match status" value="1"/>
</dbReference>
<name>AROC_PSEA6</name>
<gene>
    <name evidence="1" type="primary">aroC</name>
    <name type="ordered locus">Patl_1541</name>
</gene>
<accession>Q15VM5</accession>
<organism>
    <name type="scientific">Pseudoalteromonas atlantica (strain T6c / ATCC BAA-1087)</name>
    <dbReference type="NCBI Taxonomy" id="3042615"/>
    <lineage>
        <taxon>Bacteria</taxon>
        <taxon>Pseudomonadati</taxon>
        <taxon>Pseudomonadota</taxon>
        <taxon>Gammaproteobacteria</taxon>
        <taxon>Alteromonadales</taxon>
        <taxon>Alteromonadaceae</taxon>
        <taxon>Paraglaciecola</taxon>
    </lineage>
</organism>
<reference key="1">
    <citation type="submission" date="2006-06" db="EMBL/GenBank/DDBJ databases">
        <title>Complete sequence of Pseudoalteromonas atlantica T6c.</title>
        <authorList>
            <consortium name="US DOE Joint Genome Institute"/>
            <person name="Copeland A."/>
            <person name="Lucas S."/>
            <person name="Lapidus A."/>
            <person name="Barry K."/>
            <person name="Detter J.C."/>
            <person name="Glavina del Rio T."/>
            <person name="Hammon N."/>
            <person name="Israni S."/>
            <person name="Dalin E."/>
            <person name="Tice H."/>
            <person name="Pitluck S."/>
            <person name="Saunders E."/>
            <person name="Brettin T."/>
            <person name="Bruce D."/>
            <person name="Han C."/>
            <person name="Tapia R."/>
            <person name="Gilna P."/>
            <person name="Schmutz J."/>
            <person name="Larimer F."/>
            <person name="Land M."/>
            <person name="Hauser L."/>
            <person name="Kyrpides N."/>
            <person name="Kim E."/>
            <person name="Karls A.C."/>
            <person name="Bartlett D."/>
            <person name="Higgins B.P."/>
            <person name="Richardson P."/>
        </authorList>
    </citation>
    <scope>NUCLEOTIDE SEQUENCE [LARGE SCALE GENOMIC DNA]</scope>
    <source>
        <strain>T6c / ATCC BAA-1087</strain>
    </source>
</reference>
<sequence>MAGNTFGKLFTLSTFGESHGIAIGGVIDGCPPGLEISEADLQVDLDRRKPGTSRYTTARREEDEVQILSGVFEGKTTGTSIGLLIKNTDQRSNDYSKIKDTFRPGHADYTYQQKYGLRDYRGGGRSSARETAIRVAAGGVAKKFLKTHLGIEVRGYLSKLGPIKIDKVDHSVTNTNAFFCPDESKLEALDDYMRDLKKQGDSIGAKVSVVATNMPVGLGEPIFDRLDADLAHAMMGINAVKGVEVGDGFDTVEQKGSEHRDLMSADGFKSNRSGGVLGGISSGQDLVVHMALKPTSSISVPGESIDINGETAEVVTKGRHDPCVGIRAVPIAEAMMALVLMDHYLRHRGQNADVQSITPVIPAQSK</sequence>
<keyword id="KW-0028">Amino-acid biosynthesis</keyword>
<keyword id="KW-0057">Aromatic amino acid biosynthesis</keyword>
<keyword id="KW-0274">FAD</keyword>
<keyword id="KW-0285">Flavoprotein</keyword>
<keyword id="KW-0288">FMN</keyword>
<keyword id="KW-0456">Lyase</keyword>
<keyword id="KW-0521">NADP</keyword>
<protein>
    <recommendedName>
        <fullName evidence="1">Chorismate synthase</fullName>
        <shortName evidence="1">CS</shortName>
        <ecNumber evidence="1">4.2.3.5</ecNumber>
    </recommendedName>
    <alternativeName>
        <fullName evidence="1">5-enolpyruvylshikimate-3-phosphate phospholyase</fullName>
    </alternativeName>
</protein>